<accession>Q127P5</accession>
<evidence type="ECO:0000255" key="1">
    <source>
        <dbReference type="HAMAP-Rule" id="MF_00096"/>
    </source>
</evidence>
<comment type="function">
    <text evidence="1">This protein is involved in the repair of mismatches in DNA. It is possible that it carries out the mismatch recognition step. This protein has a weak ATPase activity.</text>
</comment>
<comment type="similarity">
    <text evidence="1">Belongs to the DNA mismatch repair MutS family.</text>
</comment>
<name>MUTS_POLSJ</name>
<protein>
    <recommendedName>
        <fullName evidence="1">DNA mismatch repair protein MutS</fullName>
    </recommendedName>
</protein>
<dbReference type="EMBL" id="CP000316">
    <property type="protein sequence ID" value="ABE45247.1"/>
    <property type="molecule type" value="Genomic_DNA"/>
</dbReference>
<dbReference type="RefSeq" id="WP_011484242.1">
    <property type="nucleotide sequence ID" value="NC_007948.1"/>
</dbReference>
<dbReference type="SMR" id="Q127P5"/>
<dbReference type="STRING" id="296591.Bpro_3337"/>
<dbReference type="KEGG" id="pol:Bpro_3337"/>
<dbReference type="eggNOG" id="COG0249">
    <property type="taxonomic scope" value="Bacteria"/>
</dbReference>
<dbReference type="HOGENOM" id="CLU_002472_4_0_4"/>
<dbReference type="OrthoDB" id="9802448at2"/>
<dbReference type="Proteomes" id="UP000001983">
    <property type="component" value="Chromosome"/>
</dbReference>
<dbReference type="GO" id="GO:0005829">
    <property type="term" value="C:cytosol"/>
    <property type="evidence" value="ECO:0007669"/>
    <property type="project" value="TreeGrafter"/>
</dbReference>
<dbReference type="GO" id="GO:0005524">
    <property type="term" value="F:ATP binding"/>
    <property type="evidence" value="ECO:0007669"/>
    <property type="project" value="UniProtKB-UniRule"/>
</dbReference>
<dbReference type="GO" id="GO:0140664">
    <property type="term" value="F:ATP-dependent DNA damage sensor activity"/>
    <property type="evidence" value="ECO:0007669"/>
    <property type="project" value="InterPro"/>
</dbReference>
<dbReference type="GO" id="GO:0003684">
    <property type="term" value="F:damaged DNA binding"/>
    <property type="evidence" value="ECO:0007669"/>
    <property type="project" value="UniProtKB-UniRule"/>
</dbReference>
<dbReference type="GO" id="GO:0030983">
    <property type="term" value="F:mismatched DNA binding"/>
    <property type="evidence" value="ECO:0007669"/>
    <property type="project" value="InterPro"/>
</dbReference>
<dbReference type="GO" id="GO:0006298">
    <property type="term" value="P:mismatch repair"/>
    <property type="evidence" value="ECO:0007669"/>
    <property type="project" value="UniProtKB-UniRule"/>
</dbReference>
<dbReference type="FunFam" id="3.40.1170.10:FF:000001">
    <property type="entry name" value="DNA mismatch repair protein MutS"/>
    <property type="match status" value="1"/>
</dbReference>
<dbReference type="Gene3D" id="1.10.1420.10">
    <property type="match status" value="2"/>
</dbReference>
<dbReference type="Gene3D" id="6.10.140.430">
    <property type="match status" value="1"/>
</dbReference>
<dbReference type="Gene3D" id="3.40.1170.10">
    <property type="entry name" value="DNA repair protein MutS, domain I"/>
    <property type="match status" value="1"/>
</dbReference>
<dbReference type="Gene3D" id="3.30.420.110">
    <property type="entry name" value="MutS, connector domain"/>
    <property type="match status" value="1"/>
</dbReference>
<dbReference type="Gene3D" id="3.40.50.300">
    <property type="entry name" value="P-loop containing nucleotide triphosphate hydrolases"/>
    <property type="match status" value="1"/>
</dbReference>
<dbReference type="HAMAP" id="MF_00096">
    <property type="entry name" value="MutS"/>
    <property type="match status" value="1"/>
</dbReference>
<dbReference type="InterPro" id="IPR005748">
    <property type="entry name" value="DNA_mismatch_repair_MutS"/>
</dbReference>
<dbReference type="InterPro" id="IPR007695">
    <property type="entry name" value="DNA_mismatch_repair_MutS-lik_N"/>
</dbReference>
<dbReference type="InterPro" id="IPR017261">
    <property type="entry name" value="DNA_mismatch_repair_MutS/MSH"/>
</dbReference>
<dbReference type="InterPro" id="IPR000432">
    <property type="entry name" value="DNA_mismatch_repair_MutS_C"/>
</dbReference>
<dbReference type="InterPro" id="IPR007861">
    <property type="entry name" value="DNA_mismatch_repair_MutS_clamp"/>
</dbReference>
<dbReference type="InterPro" id="IPR007696">
    <property type="entry name" value="DNA_mismatch_repair_MutS_core"/>
</dbReference>
<dbReference type="InterPro" id="IPR016151">
    <property type="entry name" value="DNA_mismatch_repair_MutS_N"/>
</dbReference>
<dbReference type="InterPro" id="IPR036187">
    <property type="entry name" value="DNA_mismatch_repair_MutS_sf"/>
</dbReference>
<dbReference type="InterPro" id="IPR007860">
    <property type="entry name" value="DNA_mmatch_repair_MutS_con_dom"/>
</dbReference>
<dbReference type="InterPro" id="IPR045076">
    <property type="entry name" value="MutS"/>
</dbReference>
<dbReference type="InterPro" id="IPR036678">
    <property type="entry name" value="MutS_con_dom_sf"/>
</dbReference>
<dbReference type="InterPro" id="IPR027417">
    <property type="entry name" value="P-loop_NTPase"/>
</dbReference>
<dbReference type="NCBIfam" id="TIGR01070">
    <property type="entry name" value="mutS1"/>
    <property type="match status" value="1"/>
</dbReference>
<dbReference type="NCBIfam" id="NF003810">
    <property type="entry name" value="PRK05399.1"/>
    <property type="match status" value="1"/>
</dbReference>
<dbReference type="PANTHER" id="PTHR11361:SF34">
    <property type="entry name" value="DNA MISMATCH REPAIR PROTEIN MSH1, MITOCHONDRIAL"/>
    <property type="match status" value="1"/>
</dbReference>
<dbReference type="PANTHER" id="PTHR11361">
    <property type="entry name" value="DNA MISMATCH REPAIR PROTEIN MUTS FAMILY MEMBER"/>
    <property type="match status" value="1"/>
</dbReference>
<dbReference type="Pfam" id="PF01624">
    <property type="entry name" value="MutS_I"/>
    <property type="match status" value="1"/>
</dbReference>
<dbReference type="Pfam" id="PF05188">
    <property type="entry name" value="MutS_II"/>
    <property type="match status" value="1"/>
</dbReference>
<dbReference type="Pfam" id="PF05192">
    <property type="entry name" value="MutS_III"/>
    <property type="match status" value="1"/>
</dbReference>
<dbReference type="Pfam" id="PF05190">
    <property type="entry name" value="MutS_IV"/>
    <property type="match status" value="1"/>
</dbReference>
<dbReference type="Pfam" id="PF00488">
    <property type="entry name" value="MutS_V"/>
    <property type="match status" value="1"/>
</dbReference>
<dbReference type="PIRSF" id="PIRSF037677">
    <property type="entry name" value="DNA_mis_repair_Msh6"/>
    <property type="match status" value="1"/>
</dbReference>
<dbReference type="SMART" id="SM00534">
    <property type="entry name" value="MUTSac"/>
    <property type="match status" value="1"/>
</dbReference>
<dbReference type="SMART" id="SM00533">
    <property type="entry name" value="MUTSd"/>
    <property type="match status" value="1"/>
</dbReference>
<dbReference type="SUPFAM" id="SSF55271">
    <property type="entry name" value="DNA repair protein MutS, domain I"/>
    <property type="match status" value="1"/>
</dbReference>
<dbReference type="SUPFAM" id="SSF53150">
    <property type="entry name" value="DNA repair protein MutS, domain II"/>
    <property type="match status" value="1"/>
</dbReference>
<dbReference type="SUPFAM" id="SSF48334">
    <property type="entry name" value="DNA repair protein MutS, domain III"/>
    <property type="match status" value="1"/>
</dbReference>
<dbReference type="SUPFAM" id="SSF52540">
    <property type="entry name" value="P-loop containing nucleoside triphosphate hydrolases"/>
    <property type="match status" value="1"/>
</dbReference>
<dbReference type="PROSITE" id="PS00486">
    <property type="entry name" value="DNA_MISMATCH_REPAIR_2"/>
    <property type="match status" value="1"/>
</dbReference>
<feature type="chain" id="PRO_0000335196" description="DNA mismatch repair protein MutS">
    <location>
        <begin position="1"/>
        <end position="864"/>
    </location>
</feature>
<feature type="binding site" evidence="1">
    <location>
        <begin position="623"/>
        <end position="630"/>
    </location>
    <ligand>
        <name>ATP</name>
        <dbReference type="ChEBI" id="CHEBI:30616"/>
    </ligand>
</feature>
<reference key="1">
    <citation type="journal article" date="2008" name="Appl. Environ. Microbiol.">
        <title>The genome of Polaromonas sp. strain JS666: insights into the evolution of a hydrocarbon- and xenobiotic-degrading bacterium, and features of relevance to biotechnology.</title>
        <authorList>
            <person name="Mattes T.E."/>
            <person name="Alexander A.K."/>
            <person name="Richardson P.M."/>
            <person name="Munk A.C."/>
            <person name="Han C.S."/>
            <person name="Stothard P."/>
            <person name="Coleman N.V."/>
        </authorList>
    </citation>
    <scope>NUCLEOTIDE SEQUENCE [LARGE SCALE GENOMIC DNA]</scope>
    <source>
        <strain>JS666 / ATCC BAA-500</strain>
    </source>
</reference>
<sequence length="864" mass="94258">MTDPAKTHTPMMQQYLAIKAEYPDTLVFYRMGDFYEVFFADAEKAARLLDITLTRRGQSGGEPVVMAGVPFHSLEGYLAKLIKLGESVAICEQVGDVATSKGPVERKVVRVVTPGTLTDTELLNDKAESILLAVHQGARNTCGLAWLSVTQGEIHLAHCANDELETWLARVNPSELLYNVDVTPAFEQRLKTQRCAASARPAWQFDGALGARRLLEQLKVASLASWNAEALNEAHAAASALLGYAEHTQGRALPHVQGLQVVRSGELIELPQSTRRNLELTQTLRGEDSPTLFSLLDTCSTGMGSRALKSWLLSPRRDRAQAQARLEAIAHLRSGPQQTLRARLKGCSDVERITARLALRQVRPRELVALRQTLDKLQQQSERAAGESIGLPELLTRIFEDLQPPPGCTELLGRYVLDEPAALIRDGGVINHGCDADLDELRAIQTNCDGFLLELEGRERARTGIANLRVQFNKVHGFYIEVTQGQLDKVPDDYRRRQTLKNAERYITPELKAFEDKALSAQERALAREKWLYEQLLDQLQAFIPALSRLARALASLDALCALAERSLTLNWAAPVFVKEPCIDITQGRHPVVEARLAETGGGSFIANDCSLSGKHRMQVITGPNMGGKSTYMRQVALIVLLASVGSYVPAARCRLGPIDAIHTRIGAADDVANAQSTFMLEMTEAAQILHTATPHSLVLMDEIGRGTSTFDGLALAGGIAAYLHNKTQAFTLFATHYFELTEFPAQHHGAINVHVSAVESGANIVFLHHIEPGPASKSYGIAVAKLAGVPSAVVTHARHALSALETQQTETRAQVDLFAAPPEAAAPVQTALDRALDTIDPDTLSPREALDALYQLKKLSALA</sequence>
<proteinExistence type="inferred from homology"/>
<keyword id="KW-0067">ATP-binding</keyword>
<keyword id="KW-0227">DNA damage</keyword>
<keyword id="KW-0234">DNA repair</keyword>
<keyword id="KW-0238">DNA-binding</keyword>
<keyword id="KW-0547">Nucleotide-binding</keyword>
<keyword id="KW-1185">Reference proteome</keyword>
<organism>
    <name type="scientific">Polaromonas sp. (strain JS666 / ATCC BAA-500)</name>
    <dbReference type="NCBI Taxonomy" id="296591"/>
    <lineage>
        <taxon>Bacteria</taxon>
        <taxon>Pseudomonadati</taxon>
        <taxon>Pseudomonadota</taxon>
        <taxon>Betaproteobacteria</taxon>
        <taxon>Burkholderiales</taxon>
        <taxon>Comamonadaceae</taxon>
        <taxon>Polaromonas</taxon>
    </lineage>
</organism>
<gene>
    <name evidence="1" type="primary">mutS</name>
    <name type="ordered locus">Bpro_3337</name>
</gene>